<evidence type="ECO:0000255" key="1">
    <source>
        <dbReference type="HAMAP-Rule" id="MF_00113"/>
    </source>
</evidence>
<evidence type="ECO:0000305" key="2"/>
<reference key="1">
    <citation type="journal article" date="1997" name="Nature">
        <title>Genomic sequence of a Lyme disease spirochaete, Borrelia burgdorferi.</title>
        <authorList>
            <person name="Fraser C.M."/>
            <person name="Casjens S."/>
            <person name="Huang W.M."/>
            <person name="Sutton G.G."/>
            <person name="Clayton R.A."/>
            <person name="Lathigra R."/>
            <person name="White O."/>
            <person name="Ketchum K.A."/>
            <person name="Dodson R.J."/>
            <person name="Hickey E.K."/>
            <person name="Gwinn M.L."/>
            <person name="Dougherty B.A."/>
            <person name="Tomb J.-F."/>
            <person name="Fleischmann R.D."/>
            <person name="Richardson D.L."/>
            <person name="Peterson J.D."/>
            <person name="Kerlavage A.R."/>
            <person name="Quackenbush J."/>
            <person name="Salzberg S.L."/>
            <person name="Hanson M."/>
            <person name="van Vugt R."/>
            <person name="Palmer N."/>
            <person name="Adams M.D."/>
            <person name="Gocayne J.D."/>
            <person name="Weidman J.F."/>
            <person name="Utterback T.R."/>
            <person name="Watthey L."/>
            <person name="McDonald L.A."/>
            <person name="Artiach P."/>
            <person name="Bowman C."/>
            <person name="Garland S.A."/>
            <person name="Fujii C."/>
            <person name="Cotton M.D."/>
            <person name="Horst K."/>
            <person name="Roberts K.M."/>
            <person name="Hatch B."/>
            <person name="Smith H.O."/>
            <person name="Venter J.C."/>
        </authorList>
    </citation>
    <scope>NUCLEOTIDE SEQUENCE [LARGE SCALE GENOMIC DNA]</scope>
    <source>
        <strain>ATCC 35210 / DSM 4680 / CIP 102532 / B31</strain>
    </source>
</reference>
<reference key="2">
    <citation type="submission" date="1996-10" db="EMBL/GenBank/DDBJ databases">
        <authorList>
            <person name="Boursaux-Eude C."/>
            <person name="Margarita D."/>
            <person name="Belfaiza J."/>
            <person name="Old I.G."/>
            <person name="Saint-Girons I."/>
        </authorList>
    </citation>
    <scope>NUCLEOTIDE SEQUENCE [GENOMIC DNA] OF 1-108</scope>
    <source>
        <strain>HB19</strain>
    </source>
</reference>
<proteinExistence type="inferred from homology"/>
<feature type="chain" id="PRO_0000165382" description="S-adenosylmethionine:tRNA ribosyltransferase-isomerase">
    <location>
        <begin position="1"/>
        <end position="343"/>
    </location>
</feature>
<feature type="sequence conflict" description="In Ref. 2; CAA70098." evidence="2" ref="2">
    <original>S</original>
    <variation>P</variation>
    <location>
        <position position="11"/>
    </location>
</feature>
<feature type="sequence conflict" description="In Ref. 2; CAA70098." evidence="2" ref="2">
    <original>K</original>
    <variation>E</variation>
    <location>
        <position position="41"/>
    </location>
</feature>
<feature type="sequence conflict" description="In Ref. 2; CAA70098." evidence="2" ref="2">
    <original>A</original>
    <variation>V</variation>
    <location>
        <position position="61"/>
    </location>
</feature>
<feature type="sequence conflict" description="In Ref. 2; CAA70098." evidence="2" ref="2">
    <original>A</original>
    <variation>V</variation>
    <location>
        <position position="68"/>
    </location>
</feature>
<feature type="sequence conflict" description="In Ref. 2; CAA70098." evidence="2" ref="2">
    <original>D</original>
    <variation>G</variation>
    <location>
        <position position="85"/>
    </location>
</feature>
<comment type="function">
    <text evidence="1">Transfers and isomerizes the ribose moiety from AdoMet to the 7-aminomethyl group of 7-deazaguanine (preQ1-tRNA) to give epoxyqueuosine (oQ-tRNA).</text>
</comment>
<comment type="catalytic activity">
    <reaction evidence="1">
        <text>7-aminomethyl-7-carbaguanosine(34) in tRNA + S-adenosyl-L-methionine = epoxyqueuosine(34) in tRNA + adenine + L-methionine + 2 H(+)</text>
        <dbReference type="Rhea" id="RHEA:32155"/>
        <dbReference type="Rhea" id="RHEA-COMP:10342"/>
        <dbReference type="Rhea" id="RHEA-COMP:18582"/>
        <dbReference type="ChEBI" id="CHEBI:15378"/>
        <dbReference type="ChEBI" id="CHEBI:16708"/>
        <dbReference type="ChEBI" id="CHEBI:57844"/>
        <dbReference type="ChEBI" id="CHEBI:59789"/>
        <dbReference type="ChEBI" id="CHEBI:82833"/>
        <dbReference type="ChEBI" id="CHEBI:194443"/>
        <dbReference type="EC" id="2.4.99.17"/>
    </reaction>
</comment>
<comment type="pathway">
    <text evidence="1">tRNA modification; tRNA-queuosine biosynthesis.</text>
</comment>
<comment type="subunit">
    <text evidence="1">Monomer.</text>
</comment>
<comment type="subcellular location">
    <subcellularLocation>
        <location evidence="1">Cytoplasm</location>
    </subcellularLocation>
</comment>
<comment type="similarity">
    <text evidence="1">Belongs to the QueA family.</text>
</comment>
<comment type="sequence caution" evidence="2">
    <conflict type="frameshift">
        <sequence resource="EMBL" id="AE000783"/>
    </conflict>
</comment>
<name>QUEA_BORBU</name>
<organism>
    <name type="scientific">Borreliella burgdorferi (strain ATCC 35210 / DSM 4680 / CIP 102532 / B31)</name>
    <name type="common">Borrelia burgdorferi</name>
    <dbReference type="NCBI Taxonomy" id="224326"/>
    <lineage>
        <taxon>Bacteria</taxon>
        <taxon>Pseudomonadati</taxon>
        <taxon>Spirochaetota</taxon>
        <taxon>Spirochaetia</taxon>
        <taxon>Spirochaetales</taxon>
        <taxon>Borreliaceae</taxon>
        <taxon>Borreliella</taxon>
    </lineage>
</organism>
<gene>
    <name evidence="1" type="primary">queA</name>
    <name type="ordered locus">BB_0021</name>
</gene>
<dbReference type="EC" id="2.4.99.17" evidence="1"/>
<dbReference type="EMBL" id="AE000783">
    <property type="status" value="NOT_ANNOTATED_CDS"/>
    <property type="molecule type" value="Genomic_DNA"/>
</dbReference>
<dbReference type="EMBL" id="Y08885">
    <property type="protein sequence ID" value="CAA70098.1"/>
    <property type="molecule type" value="Genomic_DNA"/>
</dbReference>
<dbReference type="PIR" id="E70102">
    <property type="entry name" value="E70102"/>
</dbReference>
<dbReference type="SMR" id="O51053"/>
<dbReference type="UniPathway" id="UPA00392"/>
<dbReference type="Proteomes" id="UP000001807">
    <property type="component" value="Chromosome"/>
</dbReference>
<dbReference type="GO" id="GO:0005737">
    <property type="term" value="C:cytoplasm"/>
    <property type="evidence" value="ECO:0007669"/>
    <property type="project" value="UniProtKB-SubCell"/>
</dbReference>
<dbReference type="GO" id="GO:0051075">
    <property type="term" value="F:S-adenosylmethionine:tRNA ribosyltransferase-isomerase activity"/>
    <property type="evidence" value="ECO:0007669"/>
    <property type="project" value="UniProtKB-EC"/>
</dbReference>
<dbReference type="GO" id="GO:0008616">
    <property type="term" value="P:queuosine biosynthetic process"/>
    <property type="evidence" value="ECO:0007669"/>
    <property type="project" value="UniProtKB-UniRule"/>
</dbReference>
<dbReference type="GO" id="GO:0002099">
    <property type="term" value="P:tRNA wobble guanine modification"/>
    <property type="evidence" value="ECO:0007669"/>
    <property type="project" value="TreeGrafter"/>
</dbReference>
<dbReference type="Gene3D" id="2.40.10.240">
    <property type="entry name" value="QueA-like"/>
    <property type="match status" value="1"/>
</dbReference>
<dbReference type="Gene3D" id="3.40.1780.10">
    <property type="entry name" value="QueA-like"/>
    <property type="match status" value="1"/>
</dbReference>
<dbReference type="HAMAP" id="MF_00113">
    <property type="entry name" value="QueA"/>
    <property type="match status" value="1"/>
</dbReference>
<dbReference type="InterPro" id="IPR003699">
    <property type="entry name" value="QueA"/>
</dbReference>
<dbReference type="InterPro" id="IPR042118">
    <property type="entry name" value="QueA_dom1"/>
</dbReference>
<dbReference type="InterPro" id="IPR042119">
    <property type="entry name" value="QueA_dom2"/>
</dbReference>
<dbReference type="InterPro" id="IPR036100">
    <property type="entry name" value="QueA_sf"/>
</dbReference>
<dbReference type="NCBIfam" id="NF001140">
    <property type="entry name" value="PRK00147.1"/>
    <property type="match status" value="1"/>
</dbReference>
<dbReference type="NCBIfam" id="TIGR00113">
    <property type="entry name" value="queA"/>
    <property type="match status" value="1"/>
</dbReference>
<dbReference type="PANTHER" id="PTHR30307">
    <property type="entry name" value="S-ADENOSYLMETHIONINE:TRNA RIBOSYLTRANSFERASE-ISOMERASE"/>
    <property type="match status" value="1"/>
</dbReference>
<dbReference type="PANTHER" id="PTHR30307:SF0">
    <property type="entry name" value="S-ADENOSYLMETHIONINE:TRNA RIBOSYLTRANSFERASE-ISOMERASE"/>
    <property type="match status" value="1"/>
</dbReference>
<dbReference type="Pfam" id="PF02547">
    <property type="entry name" value="Queuosine_synth"/>
    <property type="match status" value="1"/>
</dbReference>
<dbReference type="SUPFAM" id="SSF111337">
    <property type="entry name" value="QueA-like"/>
    <property type="match status" value="1"/>
</dbReference>
<protein>
    <recommendedName>
        <fullName evidence="1">S-adenosylmethionine:tRNA ribosyltransferase-isomerase</fullName>
        <ecNumber evidence="1">2.4.99.17</ecNumber>
    </recommendedName>
    <alternativeName>
        <fullName evidence="1">Queuosine biosynthesis protein QueA</fullName>
    </alternativeName>
</protein>
<accession>O51053</accession>
<accession>P70829</accession>
<keyword id="KW-0963">Cytoplasm</keyword>
<keyword id="KW-0671">Queuosine biosynthesis</keyword>
<keyword id="KW-1185">Reference proteome</keyword>
<keyword id="KW-0949">S-adenosyl-L-methionine</keyword>
<keyword id="KW-0808">Transferase</keyword>
<sequence>MKTKEFHFNLSHSLIEQYPSEKRGSSRLIVLDPQLQKIYHKNSVNNILKYINSNIFNNSKARKSRIYAESEMSSNVEFLILDRIDTNLFTALVSKSKKQIIGNFYKFPEGLMDEILSKNSSEVVLKFNNNVGEDYFEKHCFVPLPSYIKRDYDKIDEDRYQTIYSKYVGSTASATAGLHFSRDLFSAFENNNIEYDFITLHVGAGTFLPVRSKKVEEHNMHFETFLIKDFVAVRLQNAKLLGKRILSIVTTTLRALESSYDNNLKKFKTGQQSTNLFIYPGKNYCFKFVDMLFTNFHTPQSTLLMLVSSFAGKDFVFSFYEEAINKGYKFFSYGDAMLILNNI</sequence>